<proteinExistence type="evidence at protein level"/>
<reference key="1">
    <citation type="journal article" date="1987" name="J. Bacteriol.">
        <title>Characterization of the virE locus of Agrobacterium tumefaciens plasmid pTiC58.</title>
        <authorList>
            <person name="Hirooka T."/>
            <person name="Rogowsky P.M."/>
            <person name="Kado C.I."/>
        </authorList>
    </citation>
    <scope>NUCLEOTIDE SEQUENCE [GENOMIC DNA]</scope>
</reference>
<reference key="2">
    <citation type="journal article" date="1990" name="Plasmid">
        <title>Molecular characterization of the vir regulon of Agrobacterium tumefaciens: complete nucleotide sequence and gene organization of the 28.63-kbp regulon cloned as a single unit.</title>
        <authorList>
            <person name="Rogowsky P.M."/>
            <person name="Powell B.S."/>
            <person name="Shirasu K."/>
            <person name="Lin T.-S."/>
            <person name="Morel P."/>
            <person name="Zyprian E.M."/>
            <person name="Steck T.R."/>
            <person name="Kado C.I."/>
        </authorList>
    </citation>
    <scope>NUCLEOTIDE SEQUENCE [GENOMIC DNA]</scope>
</reference>
<reference key="3">
    <citation type="journal article" date="2001" name="Science">
        <title>The genome of the natural genetic engineer Agrobacterium tumefaciens C58.</title>
        <authorList>
            <person name="Wood D.W."/>
            <person name="Setubal J.C."/>
            <person name="Kaul R."/>
            <person name="Monks D.E."/>
            <person name="Kitajima J.P."/>
            <person name="Okura V.K."/>
            <person name="Zhou Y."/>
            <person name="Chen L."/>
            <person name="Wood G.E."/>
            <person name="Almeida N.F. Jr."/>
            <person name="Woo L."/>
            <person name="Chen Y."/>
            <person name="Paulsen I.T."/>
            <person name="Eisen J.A."/>
            <person name="Karp P.D."/>
            <person name="Bovee D. Sr."/>
            <person name="Chapman P."/>
            <person name="Clendenning J."/>
            <person name="Deatherage G."/>
            <person name="Gillet W."/>
            <person name="Grant C."/>
            <person name="Kutyavin T."/>
            <person name="Levy R."/>
            <person name="Li M.-J."/>
            <person name="McClelland E."/>
            <person name="Palmieri A."/>
            <person name="Raymond C."/>
            <person name="Rouse G."/>
            <person name="Saenphimmachak C."/>
            <person name="Wu Z."/>
            <person name="Romero P."/>
            <person name="Gordon D."/>
            <person name="Zhang S."/>
            <person name="Yoo H."/>
            <person name="Tao Y."/>
            <person name="Biddle P."/>
            <person name="Jung M."/>
            <person name="Krespan W."/>
            <person name="Perry M."/>
            <person name="Gordon-Kamm B."/>
            <person name="Liao L."/>
            <person name="Kim S."/>
            <person name="Hendrick C."/>
            <person name="Zhao Z.-Y."/>
            <person name="Dolan M."/>
            <person name="Chumley F."/>
            <person name="Tingey S.V."/>
            <person name="Tomb J.-F."/>
            <person name="Gordon M.P."/>
            <person name="Olson M.V."/>
            <person name="Nester E.W."/>
        </authorList>
    </citation>
    <scope>NUCLEOTIDE SEQUENCE [LARGE SCALE GENOMIC DNA]</scope>
</reference>
<reference key="4">
    <citation type="journal article" date="2001" name="Science">
        <title>Genome sequence of the plant pathogen and biotechnology agent Agrobacterium tumefaciens C58.</title>
        <authorList>
            <person name="Goodner B."/>
            <person name="Hinkle G."/>
            <person name="Gattung S."/>
            <person name="Miller N."/>
            <person name="Blanchard M."/>
            <person name="Qurollo B."/>
            <person name="Goldman B.S."/>
            <person name="Cao Y."/>
            <person name="Askenazi M."/>
            <person name="Halling C."/>
            <person name="Mullin L."/>
            <person name="Houmiel K."/>
            <person name="Gordon J."/>
            <person name="Vaudin M."/>
            <person name="Iartchouk O."/>
            <person name="Epp A."/>
            <person name="Liu F."/>
            <person name="Wollam C."/>
            <person name="Allinger M."/>
            <person name="Doughty D."/>
            <person name="Scott C."/>
            <person name="Lappas C."/>
            <person name="Markelz B."/>
            <person name="Flanagan C."/>
            <person name="Crowell C."/>
            <person name="Gurson J."/>
            <person name="Lomo C."/>
            <person name="Sear C."/>
            <person name="Strub G."/>
            <person name="Cielo C."/>
            <person name="Slater S."/>
        </authorList>
    </citation>
    <scope>NUCLEOTIDE SEQUENCE [LARGE SCALE GENOMIC DNA]</scope>
    <source>
        <strain>C58 / ATCC 33970</strain>
    </source>
</reference>
<reference key="5">
    <citation type="journal article" date="2008" name="Proc. Natl. Acad. Sci. U.S.A.">
        <title>Crystal structure of the Agrobacterium virulence complex VirE1-VirE2 reveals a flexible protein that can accommodate different partners.</title>
        <authorList>
            <person name="Dym O."/>
            <person name="Albeck S."/>
            <person name="Unger T."/>
            <person name="Jacobovitch J."/>
            <person name="Branzburg A."/>
            <person name="Michael Y."/>
            <person name="Frenkiel-Krispin D."/>
            <person name="Wolf S.G."/>
            <person name="Elbaum M."/>
        </authorList>
    </citation>
    <scope>X-RAY CRYSTALLOGRAPHY (2.30 ANGSTROMS) IN COMPLEX WITH VIRE2</scope>
    <scope>FUNCTION</scope>
</reference>
<name>VIRE1_AGRFC</name>
<gene>
    <name type="primary">virE1</name>
    <name type="ordered locus">Atu6189</name>
    <name type="ORF">AGR_pTi_26</name>
</gene>
<geneLocation type="plasmid">
    <name>pTiC58</name>
</geneLocation>
<organism>
    <name type="scientific">Agrobacterium fabrum (strain C58 / ATCC 33970)</name>
    <name type="common">Agrobacterium tumefaciens (strain C58)</name>
    <dbReference type="NCBI Taxonomy" id="176299"/>
    <lineage>
        <taxon>Bacteria</taxon>
        <taxon>Pseudomonadati</taxon>
        <taxon>Pseudomonadota</taxon>
        <taxon>Alphaproteobacteria</taxon>
        <taxon>Hyphomicrobiales</taxon>
        <taxon>Rhizobiaceae</taxon>
        <taxon>Rhizobium/Agrobacterium group</taxon>
        <taxon>Agrobacterium</taxon>
        <taxon>Agrobacterium tumefaciens complex</taxon>
    </lineage>
</organism>
<keyword id="KW-0002">3D-structure</keyword>
<keyword id="KW-0192">Crown gall tumor</keyword>
<keyword id="KW-0614">Plasmid</keyword>
<keyword id="KW-1185">Reference proteome</keyword>
<keyword id="KW-0843">Virulence</keyword>
<comment type="function">
    <text evidence="1">Involved in DNA transformation; controls virE2 polymerization and prevents virE2 binding to DNA.</text>
</comment>
<comment type="subunit">
    <text evidence="1">Forms heterodimers with virE2 that prevent virE2 anarchic homopolymerization and binding to DNA.</text>
</comment>
<comment type="miscellaneous">
    <text>The Ti plasmid contains at least six transcriptional units, designated vir loci, which are essential for efficient crown-gall tumorigenesis.</text>
</comment>
<dbReference type="EMBL" id="M15814">
    <property type="protein sequence ID" value="AAA98371.1"/>
    <property type="molecule type" value="Genomic_DNA"/>
</dbReference>
<dbReference type="EMBL" id="J03320">
    <property type="protein sequence ID" value="AAA91609.1"/>
    <property type="molecule type" value="Genomic_DNA"/>
</dbReference>
<dbReference type="EMBL" id="AE007871">
    <property type="protein sequence ID" value="AAK90950.1"/>
    <property type="molecule type" value="Genomic_DNA"/>
</dbReference>
<dbReference type="PIR" id="AC3251">
    <property type="entry name" value="AC3251"/>
</dbReference>
<dbReference type="PIR" id="S11844">
    <property type="entry name" value="S11844"/>
</dbReference>
<dbReference type="RefSeq" id="NP_396509.1">
    <property type="nucleotide sequence ID" value="NC_003065.3"/>
</dbReference>
<dbReference type="RefSeq" id="WP_010891482.1">
    <property type="nucleotide sequence ID" value="NC_003065.3"/>
</dbReference>
<dbReference type="PDB" id="3BTP">
    <property type="method" value="X-ray"/>
    <property type="resolution" value="2.30 A"/>
    <property type="chains" value="B=1-63"/>
</dbReference>
<dbReference type="PDBsum" id="3BTP"/>
<dbReference type="SMR" id="P08063"/>
<dbReference type="DIP" id="DIP-46169N"/>
<dbReference type="IntAct" id="P08063">
    <property type="interactions" value="1"/>
</dbReference>
<dbReference type="EnsemblBacteria" id="AAK90950">
    <property type="protein sequence ID" value="AAK90950"/>
    <property type="gene ID" value="Atu6189"/>
</dbReference>
<dbReference type="GeneID" id="86882443"/>
<dbReference type="GeneID" id="92775055"/>
<dbReference type="KEGG" id="atu:Atu6189"/>
<dbReference type="HOGENOM" id="CLU_2846756_0_0_5"/>
<dbReference type="OrthoDB" id="8291026at2"/>
<dbReference type="BioCyc" id="AGRO:ATU6189-MONOMER"/>
<dbReference type="EvolutionaryTrace" id="P08063"/>
<dbReference type="Proteomes" id="UP000000813">
    <property type="component" value="Plasmid Ti"/>
</dbReference>
<dbReference type="GO" id="GO:0006457">
    <property type="term" value="P:protein folding"/>
    <property type="evidence" value="ECO:0000304"/>
    <property type="project" value="PAMGO_GAT"/>
</dbReference>
<dbReference type="InterPro" id="IPR024237">
    <property type="entry name" value="VirE1"/>
</dbReference>
<dbReference type="NCBIfam" id="NF010441">
    <property type="entry name" value="PRK13867.1"/>
    <property type="match status" value="1"/>
</dbReference>
<dbReference type="Pfam" id="PF12189">
    <property type="entry name" value="VirE1"/>
    <property type="match status" value="1"/>
</dbReference>
<feature type="chain" id="PRO_0000065864" description="Protein virE1">
    <location>
        <begin position="1"/>
        <end position="63"/>
    </location>
</feature>
<feature type="turn" evidence="2">
    <location>
        <begin position="32"/>
        <end position="36"/>
    </location>
</feature>
<feature type="helix" evidence="2">
    <location>
        <begin position="39"/>
        <end position="52"/>
    </location>
</feature>
<evidence type="ECO:0000269" key="1">
    <source>
    </source>
</evidence>
<evidence type="ECO:0007829" key="2">
    <source>
        <dbReference type="PDB" id="3BTP"/>
    </source>
</evidence>
<sequence>MVIIKLNANKNMPVLAVEKPQEIHKEELSDHHQSNGFTSLDLEMIELENFVLHCPLPEENLAG</sequence>
<protein>
    <recommendedName>
        <fullName>Protein virE1</fullName>
    </recommendedName>
    <alternativeName>
        <fullName>7.1 kDa virulence protein</fullName>
    </alternativeName>
</protein>
<accession>P08063</accession>